<comment type="function">
    <text evidence="1">Receptor for TNFSF6/FASLG. The adapter molecule FADD recruits caspase-8 to the activated receptor. The resulting death-inducing signaling complex (DISC) performs caspase-8 proteolytic activation which initiates the subsequent cascade of caspases (aspartate-specific cysteine proteases) mediating apoptosis. FAS-mediated apoptosis may have a role in the induction of peripheral tolerance, in the antigen-stimulated suicide of mature T-cells, or both (By similarity).</text>
</comment>
<comment type="subunit">
    <text evidence="2 3">Binds DAXX. Interacts with HIPK3 (By similarity). Part of a complex containing HIPK3 and FADD (By similarity). Binds RIPK1 and FAIM2. Interacts with BABAM2 and FEM1B. Interacts with FADD (By similarity). Interacts directly (via DED domain) with NOL3 (via CARD domain); inhibits death-inducing signaling complex (DISC) assembly by inhibiting the increase in FAS-FADD binding induced by FAS activation (By similarity). Interacts with CALM (By similarity). In the absence of stimulation, interacts with BIRC2, DDX3X and GSK3B. The interaction with BIRC2 and DDX3X is further enhanced upon receptor stimulation and accompanied by DDX3X and BIRC2 cleavage (By similarity).</text>
</comment>
<comment type="subcellular location">
    <subcellularLocation>
        <location evidence="7">Cell membrane</location>
        <topology evidence="8">Single-pass type I membrane protein</topology>
    </subcellularLocation>
    <subcellularLocation>
        <location evidence="2">Membrane raft</location>
    </subcellularLocation>
</comment>
<comment type="tissue specificity">
    <text evidence="7">Detected in peripheral blood lymphocytes, thymus, spleen, lung and ovary.</text>
</comment>
<comment type="domain">
    <text>Contains a death domain involved in the binding of FADD, and maybe to other cytosolic adapter proteins.</text>
</comment>
<comment type="PTM">
    <text evidence="2">Palmitoylated. Palmitoylation by ZDHHC7 prevents the lysosomal degradation of FAS regulating its expression at the plasma membrane.</text>
</comment>
<proteinExistence type="evidence at transcript level"/>
<evidence type="ECO:0000250" key="1"/>
<evidence type="ECO:0000250" key="2">
    <source>
        <dbReference type="UniProtKB" id="P25445"/>
    </source>
</evidence>
<evidence type="ECO:0000250" key="3">
    <source>
        <dbReference type="UniProtKB" id="P25446"/>
    </source>
</evidence>
<evidence type="ECO:0000255" key="4"/>
<evidence type="ECO:0000255" key="5">
    <source>
        <dbReference type="PROSITE-ProRule" id="PRU00064"/>
    </source>
</evidence>
<evidence type="ECO:0000255" key="6">
    <source>
        <dbReference type="PROSITE-ProRule" id="PRU00206"/>
    </source>
</evidence>
<evidence type="ECO:0000269" key="7">
    <source>
    </source>
</evidence>
<evidence type="ECO:0000305" key="8"/>
<reference key="1">
    <citation type="journal article" date="1996" name="DNA Cell Biol.">
        <title>Cloning and characterization of the bovine Fas.</title>
        <authorList>
            <person name="Yoo J."/>
            <person name="Stone R.T."/>
            <person name="Beattie C.W."/>
        </authorList>
    </citation>
    <scope>NUCLEOTIDE SEQUENCE [MRNA]</scope>
    <scope>SUBCELLULAR LOCATION</scope>
    <scope>TISSUE SPECIFICITY</scope>
</reference>
<dbReference type="EMBL" id="U34794">
    <property type="protein sequence ID" value="AAC48546.1"/>
    <property type="molecule type" value="mRNA"/>
</dbReference>
<dbReference type="RefSeq" id="NP_777087.1">
    <property type="nucleotide sequence ID" value="NM_174662.2"/>
</dbReference>
<dbReference type="SMR" id="P51867"/>
<dbReference type="FunCoup" id="P51867">
    <property type="interactions" value="742"/>
</dbReference>
<dbReference type="STRING" id="9913.ENSBTAP00000014282"/>
<dbReference type="GlyCosmos" id="P51867">
    <property type="glycosylation" value="2 sites, No reported glycans"/>
</dbReference>
<dbReference type="GlyGen" id="P51867">
    <property type="glycosylation" value="2 sites"/>
</dbReference>
<dbReference type="PaxDb" id="9913-ENSBTAP00000014282"/>
<dbReference type="GeneID" id="282488"/>
<dbReference type="KEGG" id="bta:282488"/>
<dbReference type="CTD" id="355"/>
<dbReference type="eggNOG" id="ENOG502S0SV">
    <property type="taxonomic scope" value="Eukaryota"/>
</dbReference>
<dbReference type="HOGENOM" id="CLU_067123_1_0_1"/>
<dbReference type="InParanoid" id="P51867"/>
<dbReference type="OrthoDB" id="8848202at2759"/>
<dbReference type="TreeFam" id="TF333916"/>
<dbReference type="Proteomes" id="UP000009136">
    <property type="component" value="Unplaced"/>
</dbReference>
<dbReference type="GO" id="GO:0031265">
    <property type="term" value="C:CD95 death-inducing signaling complex"/>
    <property type="evidence" value="ECO:0000318"/>
    <property type="project" value="GO_Central"/>
</dbReference>
<dbReference type="GO" id="GO:0009897">
    <property type="term" value="C:external side of plasma membrane"/>
    <property type="evidence" value="ECO:0000318"/>
    <property type="project" value="GO_Central"/>
</dbReference>
<dbReference type="GO" id="GO:0045121">
    <property type="term" value="C:membrane raft"/>
    <property type="evidence" value="ECO:0000318"/>
    <property type="project" value="GO_Central"/>
</dbReference>
<dbReference type="GO" id="GO:0005516">
    <property type="term" value="F:calmodulin binding"/>
    <property type="evidence" value="ECO:0000250"/>
    <property type="project" value="UniProtKB"/>
</dbReference>
<dbReference type="GO" id="GO:0005031">
    <property type="term" value="F:tumor necrosis factor receptor activity"/>
    <property type="evidence" value="ECO:0000318"/>
    <property type="project" value="GO_Central"/>
</dbReference>
<dbReference type="GO" id="GO:0006924">
    <property type="term" value="P:activation-induced cell death of T cells"/>
    <property type="evidence" value="ECO:0000318"/>
    <property type="project" value="GO_Central"/>
</dbReference>
<dbReference type="GO" id="GO:0006955">
    <property type="term" value="P:immune response"/>
    <property type="evidence" value="ECO:0007669"/>
    <property type="project" value="InterPro"/>
</dbReference>
<dbReference type="GO" id="GO:0097049">
    <property type="term" value="P:motor neuron apoptotic process"/>
    <property type="evidence" value="ECO:0000318"/>
    <property type="project" value="GO_Central"/>
</dbReference>
<dbReference type="GO" id="GO:0097527">
    <property type="term" value="P:necroptotic signaling pathway"/>
    <property type="evidence" value="ECO:0000318"/>
    <property type="project" value="GO_Central"/>
</dbReference>
<dbReference type="GO" id="GO:0043066">
    <property type="term" value="P:negative regulation of apoptotic process"/>
    <property type="evidence" value="ECO:0000318"/>
    <property type="project" value="GO_Central"/>
</dbReference>
<dbReference type="GO" id="GO:0032872">
    <property type="term" value="P:regulation of stress-activated MAPK cascade"/>
    <property type="evidence" value="ECO:0000318"/>
    <property type="project" value="GO_Central"/>
</dbReference>
<dbReference type="CDD" id="cd08316">
    <property type="entry name" value="Death_FAS_TNFRSF6"/>
    <property type="match status" value="1"/>
</dbReference>
<dbReference type="CDD" id="cd10579">
    <property type="entry name" value="TNFRSF6"/>
    <property type="match status" value="1"/>
</dbReference>
<dbReference type="FunFam" id="1.10.533.10:FF:000057">
    <property type="entry name" value="Tumor necrosis factor receptor superfamily member 6"/>
    <property type="match status" value="1"/>
</dbReference>
<dbReference type="FunFam" id="2.10.50.10:FF:000021">
    <property type="entry name" value="Tumor necrosis factor receptor superfamily member 6"/>
    <property type="match status" value="1"/>
</dbReference>
<dbReference type="Gene3D" id="1.10.533.10">
    <property type="entry name" value="Death Domain, Fas"/>
    <property type="match status" value="1"/>
</dbReference>
<dbReference type="Gene3D" id="2.10.50.10">
    <property type="entry name" value="Tumor Necrosis Factor Receptor, subunit A, domain 2"/>
    <property type="match status" value="2"/>
</dbReference>
<dbReference type="InterPro" id="IPR011029">
    <property type="entry name" value="DEATH-like_dom_sf"/>
</dbReference>
<dbReference type="InterPro" id="IPR000488">
    <property type="entry name" value="Death_dom"/>
</dbReference>
<dbReference type="InterPro" id="IPR008063">
    <property type="entry name" value="Fas_rcpt"/>
</dbReference>
<dbReference type="InterPro" id="IPR001368">
    <property type="entry name" value="TNFR/NGFR_Cys_rich_reg"/>
</dbReference>
<dbReference type="InterPro" id="IPR033998">
    <property type="entry name" value="TNFRSF6_death"/>
</dbReference>
<dbReference type="InterPro" id="IPR033999">
    <property type="entry name" value="TNFRSF6_N"/>
</dbReference>
<dbReference type="PANTHER" id="PTHR46874">
    <property type="entry name" value="TUMOR NECROSIS FACTOR RECEPTOR SUPERFAMILY MEMBER 6"/>
    <property type="match status" value="1"/>
</dbReference>
<dbReference type="PANTHER" id="PTHR46874:SF1">
    <property type="entry name" value="TUMOR NECROSIS FACTOR RECEPTOR SUPERFAMILY MEMBER 6"/>
    <property type="match status" value="1"/>
</dbReference>
<dbReference type="Pfam" id="PF00531">
    <property type="entry name" value="Death"/>
    <property type="match status" value="1"/>
</dbReference>
<dbReference type="Pfam" id="PF00020">
    <property type="entry name" value="TNFR_c6"/>
    <property type="match status" value="2"/>
</dbReference>
<dbReference type="PRINTS" id="PR01680">
    <property type="entry name" value="TNFACTORR6"/>
</dbReference>
<dbReference type="SMART" id="SM00005">
    <property type="entry name" value="DEATH"/>
    <property type="match status" value="1"/>
</dbReference>
<dbReference type="SMART" id="SM00208">
    <property type="entry name" value="TNFR"/>
    <property type="match status" value="3"/>
</dbReference>
<dbReference type="SUPFAM" id="SSF47986">
    <property type="entry name" value="DEATH domain"/>
    <property type="match status" value="1"/>
</dbReference>
<dbReference type="SUPFAM" id="SSF57586">
    <property type="entry name" value="TNF receptor-like"/>
    <property type="match status" value="2"/>
</dbReference>
<dbReference type="PROSITE" id="PS50017">
    <property type="entry name" value="DEATH_DOMAIN"/>
    <property type="match status" value="1"/>
</dbReference>
<dbReference type="PROSITE" id="PS00652">
    <property type="entry name" value="TNFR_NGFR_1"/>
    <property type="match status" value="2"/>
</dbReference>
<dbReference type="PROSITE" id="PS50050">
    <property type="entry name" value="TNFR_NGFR_2"/>
    <property type="match status" value="2"/>
</dbReference>
<keyword id="KW-0053">Apoptosis</keyword>
<keyword id="KW-0112">Calmodulin-binding</keyword>
<keyword id="KW-1003">Cell membrane</keyword>
<keyword id="KW-1015">Disulfide bond</keyword>
<keyword id="KW-0325">Glycoprotein</keyword>
<keyword id="KW-0449">Lipoprotein</keyword>
<keyword id="KW-0472">Membrane</keyword>
<keyword id="KW-0564">Palmitate</keyword>
<keyword id="KW-0675">Receptor</keyword>
<keyword id="KW-1185">Reference proteome</keyword>
<keyword id="KW-0677">Repeat</keyword>
<keyword id="KW-0732">Signal</keyword>
<keyword id="KW-0812">Transmembrane</keyword>
<keyword id="KW-1133">Transmembrane helix</keyword>
<gene>
    <name type="primary">FAS</name>
    <name type="synonym">APT1</name>
    <name type="synonym">TNFRSF6</name>
</gene>
<accession>P51867</accession>
<protein>
    <recommendedName>
        <fullName>Tumor necrosis factor receptor superfamily member 6</fullName>
    </recommendedName>
    <alternativeName>
        <fullName>Apo-1 antigen</fullName>
    </alternativeName>
    <alternativeName>
        <fullName>Apoptosis-mediating surface antigen FAS</fullName>
    </alternativeName>
    <alternativeName>
        <fullName>FASLG receptor</fullName>
    </alternativeName>
    <cdAntigenName>CD95</cdAntigenName>
</protein>
<sequence length="323" mass="36445">MSGIWVHLSLIFISVSGPLSKGENAHMAGINSEGLKLNITEANSCQEGLYREHQFCCQPCPPGKRKNGDCKRDGDTPECVLCSEGNEYTDKSHHSDKCIRCSICDEEHGLEVEQNCTRTRNTKCRCKSNFFCNSSPCEHCNPCTTCEHGIIEKCTPTSNTKCKGSRSHANSLWALLILLIPIVLIIYKVVKSRERNKKNDYCNSAASNDEGRQLNLTDVDLGKYIPSIAEQMRITEVKEFVRKNGMEEAKIDDIMHDNVHETAEQKVQLLRNWYQSHGKKNAYCTLTKSLPKALAEKICDIVMKDITNERENANLQNENENLV</sequence>
<organism>
    <name type="scientific">Bos taurus</name>
    <name type="common">Bovine</name>
    <dbReference type="NCBI Taxonomy" id="9913"/>
    <lineage>
        <taxon>Eukaryota</taxon>
        <taxon>Metazoa</taxon>
        <taxon>Chordata</taxon>
        <taxon>Craniata</taxon>
        <taxon>Vertebrata</taxon>
        <taxon>Euteleostomi</taxon>
        <taxon>Mammalia</taxon>
        <taxon>Eutheria</taxon>
        <taxon>Laurasiatheria</taxon>
        <taxon>Artiodactyla</taxon>
        <taxon>Ruminantia</taxon>
        <taxon>Pecora</taxon>
        <taxon>Bovidae</taxon>
        <taxon>Bovinae</taxon>
        <taxon>Bos</taxon>
    </lineage>
</organism>
<name>TNR6_BOVIN</name>
<feature type="signal peptide" evidence="4">
    <location>
        <begin position="1"/>
        <end position="22"/>
    </location>
</feature>
<feature type="chain" id="PRO_0000034561" description="Tumor necrosis factor receptor superfamily member 6">
    <location>
        <begin position="23"/>
        <end position="323"/>
    </location>
</feature>
<feature type="topological domain" description="Extracellular" evidence="4">
    <location>
        <begin position="23"/>
        <end position="170"/>
    </location>
</feature>
<feature type="transmembrane region" description="Helical" evidence="4">
    <location>
        <begin position="171"/>
        <end position="188"/>
    </location>
</feature>
<feature type="topological domain" description="Cytoplasmic" evidence="4">
    <location>
        <begin position="189"/>
        <end position="323"/>
    </location>
</feature>
<feature type="repeat" description="TNFR-Cys 1">
    <location>
        <begin position="45"/>
        <end position="80"/>
    </location>
</feature>
<feature type="repeat" description="TNFR-Cys 2">
    <location>
        <begin position="81"/>
        <end position="124"/>
    </location>
</feature>
<feature type="repeat" description="TNFR-Cys 3">
    <location>
        <begin position="125"/>
        <end position="163"/>
    </location>
</feature>
<feature type="domain" description="Death" evidence="5">
    <location>
        <begin position="238"/>
        <end position="306"/>
    </location>
</feature>
<feature type="region of interest" description="Interaction with HIPK3" evidence="1">
    <location>
        <begin position="204"/>
        <end position="305"/>
    </location>
</feature>
<feature type="region of interest" description="Interaction with CALM" evidence="2">
    <location>
        <begin position="222"/>
        <end position="246"/>
    </location>
</feature>
<feature type="glycosylation site" description="N-linked (GlcNAc...) asparagine" evidence="4">
    <location>
        <position position="38"/>
    </location>
</feature>
<feature type="glycosylation site" description="N-linked (GlcNAc...) asparagine" evidence="4">
    <location>
        <position position="115"/>
    </location>
</feature>
<feature type="disulfide bond" evidence="6">
    <location>
        <begin position="45"/>
        <end position="56"/>
    </location>
</feature>
<feature type="disulfide bond" evidence="6">
    <location>
        <begin position="57"/>
        <end position="70"/>
    </location>
</feature>
<feature type="disulfide bond" evidence="6">
    <location>
        <begin position="60"/>
        <end position="79"/>
    </location>
</feature>
<feature type="disulfide bond" evidence="6">
    <location>
        <begin position="82"/>
        <end position="98"/>
    </location>
</feature>
<feature type="disulfide bond" evidence="6">
    <location>
        <begin position="101"/>
        <end position="116"/>
    </location>
</feature>
<feature type="disulfide bond" evidence="6">
    <location>
        <begin position="104"/>
        <end position="124"/>
    </location>
</feature>
<feature type="disulfide bond" evidence="6">
    <location>
        <begin position="126"/>
        <end position="140"/>
    </location>
</feature>
<feature type="disulfide bond" evidence="6">
    <location>
        <begin position="143"/>
        <end position="154"/>
    </location>
</feature>
<feature type="disulfide bond" evidence="6">
    <location>
        <begin position="146"/>
        <end position="162"/>
    </location>
</feature>